<keyword id="KW-0028">Amino-acid biosynthesis</keyword>
<keyword id="KW-0963">Cytoplasm</keyword>
<keyword id="KW-0368">Histidine biosynthesis</keyword>
<keyword id="KW-0413">Isomerase</keyword>
<dbReference type="EC" id="5.3.1.16" evidence="1"/>
<dbReference type="EMBL" id="CP000300">
    <property type="protein sequence ID" value="ABE52250.1"/>
    <property type="molecule type" value="Genomic_DNA"/>
</dbReference>
<dbReference type="RefSeq" id="WP_011499395.1">
    <property type="nucleotide sequence ID" value="NC_007955.1"/>
</dbReference>
<dbReference type="SMR" id="Q12WC6"/>
<dbReference type="STRING" id="259564.Mbur_1332"/>
<dbReference type="GeneID" id="3997548"/>
<dbReference type="KEGG" id="mbu:Mbur_1332"/>
<dbReference type="HOGENOM" id="CLU_048577_1_1_2"/>
<dbReference type="OrthoDB" id="52866at2157"/>
<dbReference type="UniPathway" id="UPA00031">
    <property type="reaction ID" value="UER00009"/>
</dbReference>
<dbReference type="Proteomes" id="UP000001979">
    <property type="component" value="Chromosome"/>
</dbReference>
<dbReference type="GO" id="GO:0005737">
    <property type="term" value="C:cytoplasm"/>
    <property type="evidence" value="ECO:0007669"/>
    <property type="project" value="UniProtKB-SubCell"/>
</dbReference>
<dbReference type="GO" id="GO:0003949">
    <property type="term" value="F:1-(5-phosphoribosyl)-5-[(5-phosphoribosylamino)methylideneamino]imidazole-4-carboxamide isomerase activity"/>
    <property type="evidence" value="ECO:0007669"/>
    <property type="project" value="UniProtKB-UniRule"/>
</dbReference>
<dbReference type="GO" id="GO:0000105">
    <property type="term" value="P:L-histidine biosynthetic process"/>
    <property type="evidence" value="ECO:0007669"/>
    <property type="project" value="UniProtKB-UniRule"/>
</dbReference>
<dbReference type="GO" id="GO:0000162">
    <property type="term" value="P:L-tryptophan biosynthetic process"/>
    <property type="evidence" value="ECO:0007669"/>
    <property type="project" value="TreeGrafter"/>
</dbReference>
<dbReference type="CDD" id="cd04732">
    <property type="entry name" value="HisA"/>
    <property type="match status" value="1"/>
</dbReference>
<dbReference type="FunFam" id="3.20.20.70:FF:000009">
    <property type="entry name" value="1-(5-phosphoribosyl)-5-[(5-phosphoribosylamino)methylideneamino] imidazole-4-carboxamide isomerase"/>
    <property type="match status" value="1"/>
</dbReference>
<dbReference type="Gene3D" id="3.20.20.70">
    <property type="entry name" value="Aldolase class I"/>
    <property type="match status" value="1"/>
</dbReference>
<dbReference type="HAMAP" id="MF_01014">
    <property type="entry name" value="HisA"/>
    <property type="match status" value="1"/>
</dbReference>
<dbReference type="InterPro" id="IPR013785">
    <property type="entry name" value="Aldolase_TIM"/>
</dbReference>
<dbReference type="InterPro" id="IPR006062">
    <property type="entry name" value="His_biosynth"/>
</dbReference>
<dbReference type="InterPro" id="IPR006063">
    <property type="entry name" value="HisA_bact_arch"/>
</dbReference>
<dbReference type="InterPro" id="IPR044524">
    <property type="entry name" value="Isoase_HisA-like"/>
</dbReference>
<dbReference type="InterPro" id="IPR023016">
    <property type="entry name" value="Isoase_HisA-like_bact"/>
</dbReference>
<dbReference type="InterPro" id="IPR011060">
    <property type="entry name" value="RibuloseP-bd_barrel"/>
</dbReference>
<dbReference type="NCBIfam" id="TIGR00007">
    <property type="entry name" value="1-(5-phosphoribosyl)-5-[(5-phosphoribosylamino)methylideneamino]imidazole-4-carboxamide isomerase"/>
    <property type="match status" value="1"/>
</dbReference>
<dbReference type="NCBIfam" id="NF010112">
    <property type="entry name" value="PRK13585.1"/>
    <property type="match status" value="1"/>
</dbReference>
<dbReference type="PANTHER" id="PTHR43090">
    <property type="entry name" value="1-(5-PHOSPHORIBOSYL)-5-[(5-PHOSPHORIBOSYLAMINO)METHYLIDENEAMINO] IMIDAZOLE-4-CARBOXAMIDE ISOMERASE"/>
    <property type="match status" value="1"/>
</dbReference>
<dbReference type="PANTHER" id="PTHR43090:SF7">
    <property type="entry name" value="1-(5-PHOSPHORIBOSYL)-5-[(5-PHOSPHORIBOSYLAMINO)METHYLIDENEAMINO] IMIDAZOLE-4-CARBOXAMIDE ISOMERASE"/>
    <property type="match status" value="1"/>
</dbReference>
<dbReference type="Pfam" id="PF00977">
    <property type="entry name" value="His_biosynth"/>
    <property type="match status" value="1"/>
</dbReference>
<dbReference type="SUPFAM" id="SSF51366">
    <property type="entry name" value="Ribulose-phoshate binding barrel"/>
    <property type="match status" value="1"/>
</dbReference>
<comment type="catalytic activity">
    <reaction evidence="1">
        <text>1-(5-phospho-beta-D-ribosyl)-5-[(5-phospho-beta-D-ribosylamino)methylideneamino]imidazole-4-carboxamide = 5-[(5-phospho-1-deoxy-D-ribulos-1-ylimino)methylamino]-1-(5-phospho-beta-D-ribosyl)imidazole-4-carboxamide</text>
        <dbReference type="Rhea" id="RHEA:15469"/>
        <dbReference type="ChEBI" id="CHEBI:58435"/>
        <dbReference type="ChEBI" id="CHEBI:58525"/>
        <dbReference type="EC" id="5.3.1.16"/>
    </reaction>
</comment>
<comment type="pathway">
    <text evidence="1">Amino-acid biosynthesis; L-histidine biosynthesis; L-histidine from 5-phospho-alpha-D-ribose 1-diphosphate: step 4/9.</text>
</comment>
<comment type="subcellular location">
    <subcellularLocation>
        <location evidence="1">Cytoplasm</location>
    </subcellularLocation>
</comment>
<comment type="similarity">
    <text evidence="1">Belongs to the HisA/HisF family.</text>
</comment>
<evidence type="ECO:0000255" key="1">
    <source>
        <dbReference type="HAMAP-Rule" id="MF_01014"/>
    </source>
</evidence>
<name>HIS4_METBU</name>
<proteinExistence type="inferred from homology"/>
<gene>
    <name evidence="1" type="primary">hisA</name>
    <name type="ordered locus">Mbur_1332</name>
</gene>
<organism>
    <name type="scientific">Methanococcoides burtonii (strain DSM 6242 / NBRC 107633 / OCM 468 / ACE-M)</name>
    <dbReference type="NCBI Taxonomy" id="259564"/>
    <lineage>
        <taxon>Archaea</taxon>
        <taxon>Methanobacteriati</taxon>
        <taxon>Methanobacteriota</taxon>
        <taxon>Stenosarchaea group</taxon>
        <taxon>Methanomicrobia</taxon>
        <taxon>Methanosarcinales</taxon>
        <taxon>Methanosarcinaceae</taxon>
        <taxon>Methanococcoides</taxon>
    </lineage>
</organism>
<sequence>MSFEVIPAVDMKGGKCVQLVQGVPGSEMISLDDPVEVALDWVSQGARTLHLIDLDGAIEGNRTNAPIIKKIVEKCKPQGIYIQVGGGIRSFEDAATLLDIGIDKVILSTAALKDPELIKKLSDEFGSEHINVALDSKNGKISIEGWTKESEHTAVEMGSQFEEKGAGSILFTNIDSEGLLNGVNPKPTEELVNAVTIPVIASGGVTTLEDIVTLKNTGAAGVVVGSALYKKRFTLTEAINIISDKN</sequence>
<feature type="chain" id="PRO_0000290573" description="1-(5-phosphoribosyl)-5-[(5-phosphoribosylamino)methylideneamino] imidazole-4-carboxamide isomerase">
    <location>
        <begin position="1"/>
        <end position="246"/>
    </location>
</feature>
<feature type="active site" description="Proton acceptor" evidence="1">
    <location>
        <position position="10"/>
    </location>
</feature>
<feature type="active site" description="Proton donor" evidence="1">
    <location>
        <position position="135"/>
    </location>
</feature>
<protein>
    <recommendedName>
        <fullName evidence="1">1-(5-phosphoribosyl)-5-[(5-phosphoribosylamino)methylideneamino] imidazole-4-carboxamide isomerase</fullName>
        <ecNumber evidence="1">5.3.1.16</ecNumber>
    </recommendedName>
    <alternativeName>
        <fullName evidence="1">Phosphoribosylformimino-5-aminoimidazole carboxamide ribotide isomerase</fullName>
    </alternativeName>
</protein>
<accession>Q12WC6</accession>
<reference key="1">
    <citation type="journal article" date="2009" name="ISME J.">
        <title>The genome sequence of the psychrophilic archaeon, Methanococcoides burtonii: the role of genome evolution in cold adaptation.</title>
        <authorList>
            <person name="Allen M.A."/>
            <person name="Lauro F.M."/>
            <person name="Williams T.J."/>
            <person name="Burg D."/>
            <person name="Siddiqui K.S."/>
            <person name="De Francisci D."/>
            <person name="Chong K.W."/>
            <person name="Pilak O."/>
            <person name="Chew H.H."/>
            <person name="De Maere M.Z."/>
            <person name="Ting L."/>
            <person name="Katrib M."/>
            <person name="Ng C."/>
            <person name="Sowers K.R."/>
            <person name="Galperin M.Y."/>
            <person name="Anderson I.J."/>
            <person name="Ivanova N."/>
            <person name="Dalin E."/>
            <person name="Martinez M."/>
            <person name="Lapidus A."/>
            <person name="Hauser L."/>
            <person name="Land M."/>
            <person name="Thomas T."/>
            <person name="Cavicchioli R."/>
        </authorList>
    </citation>
    <scope>NUCLEOTIDE SEQUENCE [LARGE SCALE GENOMIC DNA]</scope>
    <source>
        <strain>DSM 6242 / NBRC 107633 / OCM 468 / ACE-M</strain>
    </source>
</reference>